<keyword id="KW-0028">Amino-acid biosynthesis</keyword>
<keyword id="KW-0479">Metal-binding</keyword>
<keyword id="KW-0486">Methionine biosynthesis</keyword>
<keyword id="KW-0489">Methyltransferase</keyword>
<keyword id="KW-0677">Repeat</keyword>
<keyword id="KW-0808">Transferase</keyword>
<keyword id="KW-0862">Zinc</keyword>
<sequence length="762" mass="87233">MAIQTSNLGYPRIGLQREWKKTLEAFWSNKINEEQFLTTMKEIRLQHVKVQQEKGIELIPIGDFTYYDHVLDTAYMLGFIPSRFSEFTSYLDVYFAMARGSKDHVASEMTKWFNTNYHYIVPEYEEGLQISLKDNRPLRLYEEAKQELGVDGKPVILGPYTFLKLAKGYTQEQFATILKQLVAPYVQLLSELHAAGAQIIQVDEPIFASLTKEEVQQAKEIYEAIRKEVPNATLLLQTYFDSVEENYEEIITFPVSSIGLDFVHGKEGNLNAISKYGFPADKTLAVGCIDGRNIWRADLDEVLTLFTTLQKQVQTKDLIVQPSCSLLHTPIDKTEETHLSTELFDALAFANQKLEELVLIHSALTQGTESISNELETYRNVHHTIRSSAARNREDVKAARTALKEEDFSRPLPFEKRYELQQVALKLPLLPTTTIGSFPQTTEVRQTRKEWRNGIISNEQYEQFIEKETEKWIRYQEEIGLDVLVHGEFERTDMVEYFGERLAGFSFTKNGWVQSYGSRCVKPPVIYGDVAFINGMTIKETVYAQSLTEKVVKGMLTGPVTILNWSFVRNDIPRKEVSYQIALALRHEIELLESSGIRVIQVDEPALREGMPLKEKDWDAYITWAVQSFLLATSSVANETQIHTHMCYSNFEDIVDAIRALDADVISIETSRSHGEFIDTLKHTTYEKGIGLGVYDIHSPRVPSKDEMYEIVEQSLQVCDPKYFWINPDCGLKTRRTEEVIPALEHMVQAAKDARSLLKTNA</sequence>
<accession>C1EQ20</accession>
<name>METE_BACC3</name>
<evidence type="ECO:0000255" key="1">
    <source>
        <dbReference type="HAMAP-Rule" id="MF_00172"/>
    </source>
</evidence>
<comment type="function">
    <text evidence="1">Catalyzes the transfer of a methyl group from 5-methyltetrahydrofolate to homocysteine resulting in methionine formation.</text>
</comment>
<comment type="catalytic activity">
    <reaction evidence="1">
        <text>5-methyltetrahydropteroyltri-L-glutamate + L-homocysteine = tetrahydropteroyltri-L-glutamate + L-methionine</text>
        <dbReference type="Rhea" id="RHEA:21196"/>
        <dbReference type="ChEBI" id="CHEBI:57844"/>
        <dbReference type="ChEBI" id="CHEBI:58140"/>
        <dbReference type="ChEBI" id="CHEBI:58199"/>
        <dbReference type="ChEBI" id="CHEBI:58207"/>
        <dbReference type="EC" id="2.1.1.14"/>
    </reaction>
</comment>
<comment type="cofactor">
    <cofactor evidence="1">
        <name>Zn(2+)</name>
        <dbReference type="ChEBI" id="CHEBI:29105"/>
    </cofactor>
    <text evidence="1">Binds 1 zinc ion per subunit.</text>
</comment>
<comment type="pathway">
    <text evidence="1">Amino-acid biosynthesis; L-methionine biosynthesis via de novo pathway; L-methionine from L-homocysteine (MetE route): step 1/1.</text>
</comment>
<comment type="similarity">
    <text evidence="1">Belongs to the vitamin-B12 independent methionine synthase family.</text>
</comment>
<gene>
    <name evidence="1" type="primary">metE</name>
    <name type="ordered locus">BCA_4112</name>
</gene>
<dbReference type="EC" id="2.1.1.14" evidence="1"/>
<dbReference type="EMBL" id="CP001407">
    <property type="protein sequence ID" value="ACO30015.1"/>
    <property type="molecule type" value="Genomic_DNA"/>
</dbReference>
<dbReference type="RefSeq" id="WP_001007632.1">
    <property type="nucleotide sequence ID" value="NZ_CP009318.1"/>
</dbReference>
<dbReference type="SMR" id="C1EQ20"/>
<dbReference type="KEGG" id="bcx:BCA_4112"/>
<dbReference type="PATRIC" id="fig|572264.18.peg.4063"/>
<dbReference type="UniPathway" id="UPA00051">
    <property type="reaction ID" value="UER00082"/>
</dbReference>
<dbReference type="Proteomes" id="UP000002210">
    <property type="component" value="Chromosome"/>
</dbReference>
<dbReference type="GO" id="GO:0003871">
    <property type="term" value="F:5-methyltetrahydropteroyltriglutamate-homocysteine S-methyltransferase activity"/>
    <property type="evidence" value="ECO:0007669"/>
    <property type="project" value="UniProtKB-UniRule"/>
</dbReference>
<dbReference type="GO" id="GO:0008270">
    <property type="term" value="F:zinc ion binding"/>
    <property type="evidence" value="ECO:0007669"/>
    <property type="project" value="InterPro"/>
</dbReference>
<dbReference type="GO" id="GO:0009086">
    <property type="term" value="P:methionine biosynthetic process"/>
    <property type="evidence" value="ECO:0007669"/>
    <property type="project" value="UniProtKB-UniRule"/>
</dbReference>
<dbReference type="GO" id="GO:0032259">
    <property type="term" value="P:methylation"/>
    <property type="evidence" value="ECO:0007669"/>
    <property type="project" value="UniProtKB-KW"/>
</dbReference>
<dbReference type="CDD" id="cd03311">
    <property type="entry name" value="CIMS_C_terminal_like"/>
    <property type="match status" value="1"/>
</dbReference>
<dbReference type="CDD" id="cd03312">
    <property type="entry name" value="CIMS_N_terminal_like"/>
    <property type="match status" value="1"/>
</dbReference>
<dbReference type="Gene3D" id="3.20.20.210">
    <property type="match status" value="2"/>
</dbReference>
<dbReference type="HAMAP" id="MF_00172">
    <property type="entry name" value="Meth_synth"/>
    <property type="match status" value="1"/>
</dbReference>
<dbReference type="InterPro" id="IPR013215">
    <property type="entry name" value="Cbl-indep_Met_Synth_N"/>
</dbReference>
<dbReference type="InterPro" id="IPR006276">
    <property type="entry name" value="Cobalamin-indep_Met_synthase"/>
</dbReference>
<dbReference type="InterPro" id="IPR002629">
    <property type="entry name" value="Met_Synth_C/arc"/>
</dbReference>
<dbReference type="InterPro" id="IPR038071">
    <property type="entry name" value="UROD/MetE-like_sf"/>
</dbReference>
<dbReference type="NCBIfam" id="TIGR01371">
    <property type="entry name" value="met_syn_B12ind"/>
    <property type="match status" value="1"/>
</dbReference>
<dbReference type="NCBIfam" id="NF003556">
    <property type="entry name" value="PRK05222.1"/>
    <property type="match status" value="1"/>
</dbReference>
<dbReference type="PANTHER" id="PTHR30519">
    <property type="entry name" value="5-METHYLTETRAHYDROPTEROYLTRIGLUTAMATE--HOMOCYSTEINE METHYLTRANSFERASE"/>
    <property type="match status" value="1"/>
</dbReference>
<dbReference type="Pfam" id="PF08267">
    <property type="entry name" value="Meth_synt_1"/>
    <property type="match status" value="1"/>
</dbReference>
<dbReference type="Pfam" id="PF01717">
    <property type="entry name" value="Meth_synt_2"/>
    <property type="match status" value="1"/>
</dbReference>
<dbReference type="PIRSF" id="PIRSF000382">
    <property type="entry name" value="MeTrfase_B12_ind"/>
    <property type="match status" value="1"/>
</dbReference>
<dbReference type="SUPFAM" id="SSF51726">
    <property type="entry name" value="UROD/MetE-like"/>
    <property type="match status" value="2"/>
</dbReference>
<reference key="1">
    <citation type="submission" date="2009-02" db="EMBL/GenBank/DDBJ databases">
        <title>Genome sequence of Bacillus cereus 03BB102.</title>
        <authorList>
            <person name="Dodson R.J."/>
            <person name="Jackson P."/>
            <person name="Munk A.C."/>
            <person name="Brettin T."/>
            <person name="Bruce D."/>
            <person name="Detter C."/>
            <person name="Tapia R."/>
            <person name="Han C."/>
            <person name="Sutton G."/>
            <person name="Sims D."/>
        </authorList>
    </citation>
    <scope>NUCLEOTIDE SEQUENCE [LARGE SCALE GENOMIC DNA]</scope>
    <source>
        <strain>03BB102</strain>
    </source>
</reference>
<proteinExistence type="inferred from homology"/>
<organism>
    <name type="scientific">Bacillus cereus (strain 03BB102)</name>
    <dbReference type="NCBI Taxonomy" id="572264"/>
    <lineage>
        <taxon>Bacteria</taxon>
        <taxon>Bacillati</taxon>
        <taxon>Bacillota</taxon>
        <taxon>Bacilli</taxon>
        <taxon>Bacillales</taxon>
        <taxon>Bacillaceae</taxon>
        <taxon>Bacillus</taxon>
        <taxon>Bacillus cereus group</taxon>
    </lineage>
</organism>
<feature type="chain" id="PRO_1000203708" description="5-methyltetrahydropteroyltriglutamate--homocysteine methyltransferase">
    <location>
        <begin position="1"/>
        <end position="762"/>
    </location>
</feature>
<feature type="active site" description="Proton donor" evidence="1">
    <location>
        <position position="698"/>
    </location>
</feature>
<feature type="binding site" evidence="1">
    <location>
        <begin position="17"/>
        <end position="20"/>
    </location>
    <ligand>
        <name>5-methyltetrahydropteroyltri-L-glutamate</name>
        <dbReference type="ChEBI" id="CHEBI:58207"/>
    </ligand>
</feature>
<feature type="binding site" evidence="1">
    <location>
        <position position="111"/>
    </location>
    <ligand>
        <name>5-methyltetrahydropteroyltri-L-glutamate</name>
        <dbReference type="ChEBI" id="CHEBI:58207"/>
    </ligand>
</feature>
<feature type="binding site" evidence="1">
    <location>
        <begin position="435"/>
        <end position="437"/>
    </location>
    <ligand>
        <name>L-homocysteine</name>
        <dbReference type="ChEBI" id="CHEBI:58199"/>
    </ligand>
</feature>
<feature type="binding site" evidence="1">
    <location>
        <begin position="435"/>
        <end position="437"/>
    </location>
    <ligand>
        <name>L-methionine</name>
        <dbReference type="ChEBI" id="CHEBI:57844"/>
    </ligand>
</feature>
<feature type="binding site" evidence="1">
    <location>
        <position position="488"/>
    </location>
    <ligand>
        <name>L-homocysteine</name>
        <dbReference type="ChEBI" id="CHEBI:58199"/>
    </ligand>
</feature>
<feature type="binding site" evidence="1">
    <location>
        <position position="488"/>
    </location>
    <ligand>
        <name>L-methionine</name>
        <dbReference type="ChEBI" id="CHEBI:57844"/>
    </ligand>
</feature>
<feature type="binding site" evidence="1">
    <location>
        <begin position="519"/>
        <end position="520"/>
    </location>
    <ligand>
        <name>5-methyltetrahydropteroyltri-L-glutamate</name>
        <dbReference type="ChEBI" id="CHEBI:58207"/>
    </ligand>
</feature>
<feature type="binding site" evidence="1">
    <location>
        <position position="565"/>
    </location>
    <ligand>
        <name>5-methyltetrahydropteroyltri-L-glutamate</name>
        <dbReference type="ChEBI" id="CHEBI:58207"/>
    </ligand>
</feature>
<feature type="binding site" evidence="1">
    <location>
        <position position="603"/>
    </location>
    <ligand>
        <name>L-homocysteine</name>
        <dbReference type="ChEBI" id="CHEBI:58199"/>
    </ligand>
</feature>
<feature type="binding site" evidence="1">
    <location>
        <position position="603"/>
    </location>
    <ligand>
        <name>L-methionine</name>
        <dbReference type="ChEBI" id="CHEBI:57844"/>
    </ligand>
</feature>
<feature type="binding site" evidence="1">
    <location>
        <position position="609"/>
    </location>
    <ligand>
        <name>5-methyltetrahydropteroyltri-L-glutamate</name>
        <dbReference type="ChEBI" id="CHEBI:58207"/>
    </ligand>
</feature>
<feature type="binding site" evidence="1">
    <location>
        <position position="645"/>
    </location>
    <ligand>
        <name>Zn(2+)</name>
        <dbReference type="ChEBI" id="CHEBI:29105"/>
        <note>catalytic</note>
    </ligand>
</feature>
<feature type="binding site" evidence="1">
    <location>
        <position position="647"/>
    </location>
    <ligand>
        <name>Zn(2+)</name>
        <dbReference type="ChEBI" id="CHEBI:29105"/>
        <note>catalytic</note>
    </ligand>
</feature>
<feature type="binding site" evidence="1">
    <location>
        <position position="669"/>
    </location>
    <ligand>
        <name>Zn(2+)</name>
        <dbReference type="ChEBI" id="CHEBI:29105"/>
        <note>catalytic</note>
    </ligand>
</feature>
<feature type="binding site" evidence="1">
    <location>
        <position position="730"/>
    </location>
    <ligand>
        <name>Zn(2+)</name>
        <dbReference type="ChEBI" id="CHEBI:29105"/>
        <note>catalytic</note>
    </ligand>
</feature>
<protein>
    <recommendedName>
        <fullName evidence="1">5-methyltetrahydropteroyltriglutamate--homocysteine methyltransferase</fullName>
        <ecNumber evidence="1">2.1.1.14</ecNumber>
    </recommendedName>
    <alternativeName>
        <fullName evidence="1">Cobalamin-independent methionine synthase</fullName>
    </alternativeName>
    <alternativeName>
        <fullName evidence="1">Methionine synthase, vitamin-B12 independent isozyme</fullName>
    </alternativeName>
</protein>